<name>PFKA_BAUCH</name>
<comment type="function">
    <text evidence="1">Catalyzes the phosphorylation of D-fructose 6-phosphate to fructose 1,6-bisphosphate by ATP, the first committing step of glycolysis.</text>
</comment>
<comment type="catalytic activity">
    <reaction evidence="1">
        <text>beta-D-fructose 6-phosphate + ATP = beta-D-fructose 1,6-bisphosphate + ADP + H(+)</text>
        <dbReference type="Rhea" id="RHEA:16109"/>
        <dbReference type="ChEBI" id="CHEBI:15378"/>
        <dbReference type="ChEBI" id="CHEBI:30616"/>
        <dbReference type="ChEBI" id="CHEBI:32966"/>
        <dbReference type="ChEBI" id="CHEBI:57634"/>
        <dbReference type="ChEBI" id="CHEBI:456216"/>
        <dbReference type="EC" id="2.7.1.11"/>
    </reaction>
</comment>
<comment type="cofactor">
    <cofactor evidence="1">
        <name>Mg(2+)</name>
        <dbReference type="ChEBI" id="CHEBI:18420"/>
    </cofactor>
</comment>
<comment type="activity regulation">
    <text evidence="1">Allosterically activated by ADP and other diphosphonucleosides, and allosterically inhibited by phosphoenolpyruvate.</text>
</comment>
<comment type="pathway">
    <text evidence="1">Carbohydrate degradation; glycolysis; D-glyceraldehyde 3-phosphate and glycerone phosphate from D-glucose: step 3/4.</text>
</comment>
<comment type="subunit">
    <text evidence="1">Homotetramer.</text>
</comment>
<comment type="subcellular location">
    <subcellularLocation>
        <location evidence="1">Cytoplasm</location>
    </subcellularLocation>
</comment>
<comment type="similarity">
    <text evidence="1">Belongs to the phosphofructokinase type A (PFKA) family. ATP-dependent PFK group I subfamily. Prokaryotic clade 'B1' sub-subfamily.</text>
</comment>
<protein>
    <recommendedName>
        <fullName evidence="1">ATP-dependent 6-phosphofructokinase</fullName>
        <shortName evidence="1">ATP-PFK</shortName>
        <shortName evidence="1">Phosphofructokinase</shortName>
        <ecNumber evidence="1">2.7.1.11</ecNumber>
    </recommendedName>
    <alternativeName>
        <fullName evidence="1">Phosphohexokinase</fullName>
    </alternativeName>
</protein>
<feature type="chain" id="PRO_1000059747" description="ATP-dependent 6-phosphofructokinase">
    <location>
        <begin position="1"/>
        <end position="320"/>
    </location>
</feature>
<feature type="active site" description="Proton acceptor" evidence="1">
    <location>
        <position position="128"/>
    </location>
</feature>
<feature type="binding site" evidence="1">
    <location>
        <position position="12"/>
    </location>
    <ligand>
        <name>ATP</name>
        <dbReference type="ChEBI" id="CHEBI:30616"/>
    </ligand>
</feature>
<feature type="binding site" evidence="1">
    <location>
        <begin position="22"/>
        <end position="26"/>
    </location>
    <ligand>
        <name>ADP</name>
        <dbReference type="ChEBI" id="CHEBI:456216"/>
        <note>allosteric activator; ligand shared between dimeric partners</note>
    </ligand>
</feature>
<feature type="binding site" evidence="1">
    <location>
        <begin position="55"/>
        <end position="60"/>
    </location>
    <ligand>
        <name>ADP</name>
        <dbReference type="ChEBI" id="CHEBI:456216"/>
        <note>allosteric activator; ligand shared between dimeric partners</note>
    </ligand>
</feature>
<feature type="binding site" evidence="1">
    <location>
        <begin position="73"/>
        <end position="74"/>
    </location>
    <ligand>
        <name>ATP</name>
        <dbReference type="ChEBI" id="CHEBI:30616"/>
    </ligand>
</feature>
<feature type="binding site" evidence="1">
    <location>
        <begin position="103"/>
        <end position="106"/>
    </location>
    <ligand>
        <name>ATP</name>
        <dbReference type="ChEBI" id="CHEBI:30616"/>
    </ligand>
</feature>
<feature type="binding site" evidence="1">
    <location>
        <position position="104"/>
    </location>
    <ligand>
        <name>Mg(2+)</name>
        <dbReference type="ChEBI" id="CHEBI:18420"/>
        <note>catalytic</note>
    </ligand>
</feature>
<feature type="binding site" description="in other chain" evidence="1">
    <location>
        <begin position="126"/>
        <end position="128"/>
    </location>
    <ligand>
        <name>substrate</name>
        <note>ligand shared between dimeric partners</note>
    </ligand>
</feature>
<feature type="binding site" description="in other chain" evidence="1">
    <location>
        <position position="155"/>
    </location>
    <ligand>
        <name>ADP</name>
        <dbReference type="ChEBI" id="CHEBI:456216"/>
        <note>allosteric activator; ligand shared between dimeric partners</note>
    </ligand>
</feature>
<feature type="binding site" evidence="1">
    <location>
        <position position="163"/>
    </location>
    <ligand>
        <name>substrate</name>
        <note>ligand shared between dimeric partners</note>
    </ligand>
</feature>
<feature type="binding site" description="in other chain" evidence="1">
    <location>
        <begin position="170"/>
        <end position="172"/>
    </location>
    <ligand>
        <name>substrate</name>
        <note>ligand shared between dimeric partners</note>
    </ligand>
</feature>
<feature type="binding site" description="in other chain" evidence="1">
    <location>
        <begin position="186"/>
        <end position="188"/>
    </location>
    <ligand>
        <name>ADP</name>
        <dbReference type="ChEBI" id="CHEBI:456216"/>
        <note>allosteric activator; ligand shared between dimeric partners</note>
    </ligand>
</feature>
<feature type="binding site" description="in other chain" evidence="1">
    <location>
        <begin position="214"/>
        <end position="216"/>
    </location>
    <ligand>
        <name>ADP</name>
        <dbReference type="ChEBI" id="CHEBI:456216"/>
        <note>allosteric activator; ligand shared between dimeric partners</note>
    </ligand>
</feature>
<feature type="binding site" description="in other chain" evidence="1">
    <location>
        <position position="223"/>
    </location>
    <ligand>
        <name>substrate</name>
        <note>ligand shared between dimeric partners</note>
    </ligand>
</feature>
<feature type="binding site" evidence="1">
    <location>
        <position position="244"/>
    </location>
    <ligand>
        <name>substrate</name>
        <note>ligand shared between dimeric partners</note>
    </ligand>
</feature>
<feature type="binding site" description="in other chain" evidence="1">
    <location>
        <begin position="250"/>
        <end position="253"/>
    </location>
    <ligand>
        <name>substrate</name>
        <note>ligand shared between dimeric partners</note>
    </ligand>
</feature>
<sequence length="320" mass="35151">MINKIGVLTSGGDSPGMNAAIRSVVRAGLSEGLEIYGISDGYQGLYQDRMRKLDRYSVSDIINRGGTFLGSARFQEFREEAIRAIALNNMSKYGLGALVVIGGDGSYMGAKLLTEMGLPCIGLPGTIDNDVAGTDYTIGYFTALETVVEAIDRLRDTSTSHQRISIVEVMGRYCGDLTMAAAIAGGCEFIVLPEVEFQPEDLVYEIKASIAQGKKHAIVAITEYICNVFELALYIEKETGRETRATVLGHIQRGGNPVAYDRILASRMGAYSIELLLQGYRGRCVGVQNERLVHHDIADVIQNMKRPFRRDFLETARKLF</sequence>
<organism>
    <name type="scientific">Baumannia cicadellinicola subsp. Homalodisca coagulata</name>
    <dbReference type="NCBI Taxonomy" id="374463"/>
    <lineage>
        <taxon>Bacteria</taxon>
        <taxon>Pseudomonadati</taxon>
        <taxon>Pseudomonadota</taxon>
        <taxon>Gammaproteobacteria</taxon>
        <taxon>Candidatus Palibaumannia</taxon>
    </lineage>
</organism>
<gene>
    <name evidence="1" type="primary">pfkA</name>
    <name type="ordered locus">BCI_0171</name>
</gene>
<proteinExistence type="inferred from homology"/>
<keyword id="KW-0021">Allosteric enzyme</keyword>
<keyword id="KW-0067">ATP-binding</keyword>
<keyword id="KW-0963">Cytoplasm</keyword>
<keyword id="KW-0324">Glycolysis</keyword>
<keyword id="KW-0418">Kinase</keyword>
<keyword id="KW-0460">Magnesium</keyword>
<keyword id="KW-0479">Metal-binding</keyword>
<keyword id="KW-0547">Nucleotide-binding</keyword>
<keyword id="KW-1185">Reference proteome</keyword>
<keyword id="KW-0808">Transferase</keyword>
<evidence type="ECO:0000255" key="1">
    <source>
        <dbReference type="HAMAP-Rule" id="MF_00339"/>
    </source>
</evidence>
<dbReference type="EC" id="2.7.1.11" evidence="1"/>
<dbReference type="EMBL" id="CP000238">
    <property type="protein sequence ID" value="ABF13987.1"/>
    <property type="molecule type" value="Genomic_DNA"/>
</dbReference>
<dbReference type="RefSeq" id="WP_011520365.1">
    <property type="nucleotide sequence ID" value="NC_007984.1"/>
</dbReference>
<dbReference type="SMR" id="Q1LTT2"/>
<dbReference type="STRING" id="374463.BCI_0171"/>
<dbReference type="KEGG" id="bci:BCI_0171"/>
<dbReference type="HOGENOM" id="CLU_020655_0_1_6"/>
<dbReference type="OrthoDB" id="9802503at2"/>
<dbReference type="UniPathway" id="UPA00109">
    <property type="reaction ID" value="UER00182"/>
</dbReference>
<dbReference type="Proteomes" id="UP000002427">
    <property type="component" value="Chromosome"/>
</dbReference>
<dbReference type="GO" id="GO:0005945">
    <property type="term" value="C:6-phosphofructokinase complex"/>
    <property type="evidence" value="ECO:0007669"/>
    <property type="project" value="TreeGrafter"/>
</dbReference>
<dbReference type="GO" id="GO:0003872">
    <property type="term" value="F:6-phosphofructokinase activity"/>
    <property type="evidence" value="ECO:0007669"/>
    <property type="project" value="UniProtKB-UniRule"/>
</dbReference>
<dbReference type="GO" id="GO:0016208">
    <property type="term" value="F:AMP binding"/>
    <property type="evidence" value="ECO:0007669"/>
    <property type="project" value="TreeGrafter"/>
</dbReference>
<dbReference type="GO" id="GO:0005524">
    <property type="term" value="F:ATP binding"/>
    <property type="evidence" value="ECO:0007669"/>
    <property type="project" value="UniProtKB-KW"/>
</dbReference>
<dbReference type="GO" id="GO:0070095">
    <property type="term" value="F:fructose-6-phosphate binding"/>
    <property type="evidence" value="ECO:0007669"/>
    <property type="project" value="TreeGrafter"/>
</dbReference>
<dbReference type="GO" id="GO:0042802">
    <property type="term" value="F:identical protein binding"/>
    <property type="evidence" value="ECO:0007669"/>
    <property type="project" value="TreeGrafter"/>
</dbReference>
<dbReference type="GO" id="GO:0046872">
    <property type="term" value="F:metal ion binding"/>
    <property type="evidence" value="ECO:0007669"/>
    <property type="project" value="UniProtKB-KW"/>
</dbReference>
<dbReference type="GO" id="GO:0048029">
    <property type="term" value="F:monosaccharide binding"/>
    <property type="evidence" value="ECO:0007669"/>
    <property type="project" value="TreeGrafter"/>
</dbReference>
<dbReference type="GO" id="GO:0061621">
    <property type="term" value="P:canonical glycolysis"/>
    <property type="evidence" value="ECO:0007669"/>
    <property type="project" value="TreeGrafter"/>
</dbReference>
<dbReference type="GO" id="GO:0030388">
    <property type="term" value="P:fructose 1,6-bisphosphate metabolic process"/>
    <property type="evidence" value="ECO:0007669"/>
    <property type="project" value="TreeGrafter"/>
</dbReference>
<dbReference type="GO" id="GO:0006002">
    <property type="term" value="P:fructose 6-phosphate metabolic process"/>
    <property type="evidence" value="ECO:0007669"/>
    <property type="project" value="InterPro"/>
</dbReference>
<dbReference type="CDD" id="cd00763">
    <property type="entry name" value="Bacterial_PFK"/>
    <property type="match status" value="1"/>
</dbReference>
<dbReference type="FunFam" id="3.40.50.450:FF:000001">
    <property type="entry name" value="ATP-dependent 6-phosphofructokinase"/>
    <property type="match status" value="1"/>
</dbReference>
<dbReference type="FunFam" id="3.40.50.460:FF:000002">
    <property type="entry name" value="ATP-dependent 6-phosphofructokinase"/>
    <property type="match status" value="1"/>
</dbReference>
<dbReference type="Gene3D" id="3.40.50.450">
    <property type="match status" value="1"/>
</dbReference>
<dbReference type="Gene3D" id="3.40.50.460">
    <property type="entry name" value="Phosphofructokinase domain"/>
    <property type="match status" value="1"/>
</dbReference>
<dbReference type="HAMAP" id="MF_00339">
    <property type="entry name" value="Phosphofructokinase_I_B1"/>
    <property type="match status" value="1"/>
</dbReference>
<dbReference type="InterPro" id="IPR022953">
    <property type="entry name" value="ATP_PFK"/>
</dbReference>
<dbReference type="InterPro" id="IPR012003">
    <property type="entry name" value="ATP_PFK_prok-type"/>
</dbReference>
<dbReference type="InterPro" id="IPR012828">
    <property type="entry name" value="PFKA_ATP_prok"/>
</dbReference>
<dbReference type="InterPro" id="IPR015912">
    <property type="entry name" value="Phosphofructokinase_CS"/>
</dbReference>
<dbReference type="InterPro" id="IPR000023">
    <property type="entry name" value="Phosphofructokinase_dom"/>
</dbReference>
<dbReference type="InterPro" id="IPR035966">
    <property type="entry name" value="PKF_sf"/>
</dbReference>
<dbReference type="NCBIfam" id="TIGR02482">
    <property type="entry name" value="PFKA_ATP"/>
    <property type="match status" value="1"/>
</dbReference>
<dbReference type="NCBIfam" id="NF002872">
    <property type="entry name" value="PRK03202.1"/>
    <property type="match status" value="1"/>
</dbReference>
<dbReference type="PANTHER" id="PTHR13697:SF4">
    <property type="entry name" value="ATP-DEPENDENT 6-PHOSPHOFRUCTOKINASE"/>
    <property type="match status" value="1"/>
</dbReference>
<dbReference type="PANTHER" id="PTHR13697">
    <property type="entry name" value="PHOSPHOFRUCTOKINASE"/>
    <property type="match status" value="1"/>
</dbReference>
<dbReference type="Pfam" id="PF00365">
    <property type="entry name" value="PFK"/>
    <property type="match status" value="1"/>
</dbReference>
<dbReference type="PIRSF" id="PIRSF000532">
    <property type="entry name" value="ATP_PFK_prok"/>
    <property type="match status" value="1"/>
</dbReference>
<dbReference type="PRINTS" id="PR00476">
    <property type="entry name" value="PHFRCTKINASE"/>
</dbReference>
<dbReference type="SUPFAM" id="SSF53784">
    <property type="entry name" value="Phosphofructokinase"/>
    <property type="match status" value="1"/>
</dbReference>
<dbReference type="PROSITE" id="PS00433">
    <property type="entry name" value="PHOSPHOFRUCTOKINASE"/>
    <property type="match status" value="1"/>
</dbReference>
<reference key="1">
    <citation type="journal article" date="2006" name="PLoS Biol.">
        <title>Metabolic complementarity and genomics of the dual bacterial symbiosis of sharpshooters.</title>
        <authorList>
            <person name="Wu D."/>
            <person name="Daugherty S.C."/>
            <person name="Van Aken S.E."/>
            <person name="Pai G.H."/>
            <person name="Watkins K.L."/>
            <person name="Khouri H."/>
            <person name="Tallon L.J."/>
            <person name="Zaborsky J.M."/>
            <person name="Dunbar H.E."/>
            <person name="Tran P.L."/>
            <person name="Moran N.A."/>
            <person name="Eisen J.A."/>
        </authorList>
    </citation>
    <scope>NUCLEOTIDE SEQUENCE [LARGE SCALE GENOMIC DNA]</scope>
</reference>
<accession>Q1LTT2</accession>